<reference key="1">
    <citation type="submission" date="2005-07" db="EMBL/GenBank/DDBJ databases">
        <title>Complete sequence of Synechococcus sp. CC9605.</title>
        <authorList>
            <consortium name="US DOE Joint Genome Institute"/>
            <person name="Copeland A."/>
            <person name="Lucas S."/>
            <person name="Lapidus A."/>
            <person name="Barry K."/>
            <person name="Detter J.C."/>
            <person name="Glavina T."/>
            <person name="Hammon N."/>
            <person name="Israni S."/>
            <person name="Pitluck S."/>
            <person name="Schmutz J."/>
            <person name="Martinez M."/>
            <person name="Larimer F."/>
            <person name="Land M."/>
            <person name="Kyrpides N."/>
            <person name="Ivanova N."/>
            <person name="Richardson P."/>
        </authorList>
    </citation>
    <scope>NUCLEOTIDE SEQUENCE [LARGE SCALE GENOMIC DNA]</scope>
    <source>
        <strain>CC9605</strain>
    </source>
</reference>
<name>YIDD_SYNSC</name>
<organism>
    <name type="scientific">Synechococcus sp. (strain CC9605)</name>
    <dbReference type="NCBI Taxonomy" id="110662"/>
    <lineage>
        <taxon>Bacteria</taxon>
        <taxon>Bacillati</taxon>
        <taxon>Cyanobacteriota</taxon>
        <taxon>Cyanophyceae</taxon>
        <taxon>Synechococcales</taxon>
        <taxon>Synechococcaceae</taxon>
        <taxon>Synechococcus</taxon>
    </lineage>
</organism>
<dbReference type="EMBL" id="CP000110">
    <property type="protein sequence ID" value="ABB34556.1"/>
    <property type="molecule type" value="Genomic_DNA"/>
</dbReference>
<dbReference type="RefSeq" id="WP_011363782.1">
    <property type="nucleotide sequence ID" value="NC_007516.1"/>
</dbReference>
<dbReference type="STRING" id="110662.Syncc9605_0788"/>
<dbReference type="KEGG" id="syd:Syncc9605_0788"/>
<dbReference type="eggNOG" id="COG0759">
    <property type="taxonomic scope" value="Bacteria"/>
</dbReference>
<dbReference type="HOGENOM" id="CLU_144811_6_1_3"/>
<dbReference type="OrthoDB" id="9801753at2"/>
<dbReference type="GO" id="GO:0005886">
    <property type="term" value="C:plasma membrane"/>
    <property type="evidence" value="ECO:0007669"/>
    <property type="project" value="UniProtKB-SubCell"/>
</dbReference>
<dbReference type="HAMAP" id="MF_00386">
    <property type="entry name" value="UPF0161_YidD"/>
    <property type="match status" value="1"/>
</dbReference>
<dbReference type="InterPro" id="IPR002696">
    <property type="entry name" value="Membr_insert_effic_factor_YidD"/>
</dbReference>
<dbReference type="NCBIfam" id="TIGR00278">
    <property type="entry name" value="membrane protein insertion efficiency factor YidD"/>
    <property type="match status" value="1"/>
</dbReference>
<dbReference type="PANTHER" id="PTHR33383">
    <property type="entry name" value="MEMBRANE PROTEIN INSERTION EFFICIENCY FACTOR-RELATED"/>
    <property type="match status" value="1"/>
</dbReference>
<dbReference type="PANTHER" id="PTHR33383:SF1">
    <property type="entry name" value="MEMBRANE PROTEIN INSERTION EFFICIENCY FACTOR-RELATED"/>
    <property type="match status" value="1"/>
</dbReference>
<dbReference type="Pfam" id="PF01809">
    <property type="entry name" value="YidD"/>
    <property type="match status" value="1"/>
</dbReference>
<dbReference type="SMART" id="SM01234">
    <property type="entry name" value="Haemolytic"/>
    <property type="match status" value="1"/>
</dbReference>
<protein>
    <recommendedName>
        <fullName evidence="1">Putative membrane protein insertion efficiency factor</fullName>
    </recommendedName>
</protein>
<accession>Q3ALH6</accession>
<proteinExistence type="inferred from homology"/>
<keyword id="KW-0997">Cell inner membrane</keyword>
<keyword id="KW-1003">Cell membrane</keyword>
<keyword id="KW-0472">Membrane</keyword>
<evidence type="ECO:0000255" key="1">
    <source>
        <dbReference type="HAMAP-Rule" id="MF_00386"/>
    </source>
</evidence>
<comment type="function">
    <text evidence="1">Could be involved in insertion of integral membrane proteins into the membrane.</text>
</comment>
<comment type="subcellular location">
    <subcellularLocation>
        <location evidence="1">Cell inner membrane</location>
        <topology evidence="1">Peripheral membrane protein</topology>
        <orientation evidence="1">Cytoplasmic side</orientation>
    </subcellularLocation>
</comment>
<comment type="similarity">
    <text evidence="1">Belongs to the UPF0161 family.</text>
</comment>
<gene>
    <name type="ordered locus">Syncc9605_0788</name>
</gene>
<feature type="chain" id="PRO_0000253186" description="Putative membrane protein insertion efficiency factor">
    <location>
        <begin position="1"/>
        <end position="92"/>
    </location>
</feature>
<sequence>MHESNTLYGGPMTKLRQAINQVLAAVLLAGIGFYRRFISPMIGPRCRFTPTCSAYGLEAIQKHGPWKGGWLTVKRLLRCHPFTPCGCDPVPD</sequence>